<proteinExistence type="inferred from homology"/>
<sequence length="94" mass="10830">MNIYDILKKPLVTEKTTLEKDAKNVISFEVDRSANKIEIKNAVEKLFKVEVSEVNTVNVAGKLKRVGRHYGKRSNWKKAYVTLKEGNNVDFFEI</sequence>
<name>RL23_GEOMG</name>
<feature type="chain" id="PRO_0000272751" description="Large ribosomal subunit protein uL23">
    <location>
        <begin position="1"/>
        <end position="94"/>
    </location>
</feature>
<organism>
    <name type="scientific">Geobacter metallireducens (strain ATCC 53774 / DSM 7210 / GS-15)</name>
    <dbReference type="NCBI Taxonomy" id="269799"/>
    <lineage>
        <taxon>Bacteria</taxon>
        <taxon>Pseudomonadati</taxon>
        <taxon>Thermodesulfobacteriota</taxon>
        <taxon>Desulfuromonadia</taxon>
        <taxon>Geobacterales</taxon>
        <taxon>Geobacteraceae</taxon>
        <taxon>Geobacter</taxon>
    </lineage>
</organism>
<dbReference type="EMBL" id="CP000148">
    <property type="protein sequence ID" value="ABB30870.1"/>
    <property type="molecule type" value="Genomic_DNA"/>
</dbReference>
<dbReference type="RefSeq" id="WP_004514239.1">
    <property type="nucleotide sequence ID" value="NC_007517.1"/>
</dbReference>
<dbReference type="SMR" id="Q39Y04"/>
<dbReference type="STRING" id="269799.Gmet_0628"/>
<dbReference type="KEGG" id="gme:Gmet_0628"/>
<dbReference type="eggNOG" id="COG0089">
    <property type="taxonomic scope" value="Bacteria"/>
</dbReference>
<dbReference type="HOGENOM" id="CLU_037562_3_1_7"/>
<dbReference type="Proteomes" id="UP000007073">
    <property type="component" value="Chromosome"/>
</dbReference>
<dbReference type="GO" id="GO:1990904">
    <property type="term" value="C:ribonucleoprotein complex"/>
    <property type="evidence" value="ECO:0007669"/>
    <property type="project" value="UniProtKB-KW"/>
</dbReference>
<dbReference type="GO" id="GO:0005840">
    <property type="term" value="C:ribosome"/>
    <property type="evidence" value="ECO:0007669"/>
    <property type="project" value="UniProtKB-KW"/>
</dbReference>
<dbReference type="GO" id="GO:0019843">
    <property type="term" value="F:rRNA binding"/>
    <property type="evidence" value="ECO:0007669"/>
    <property type="project" value="UniProtKB-UniRule"/>
</dbReference>
<dbReference type="GO" id="GO:0003735">
    <property type="term" value="F:structural constituent of ribosome"/>
    <property type="evidence" value="ECO:0007669"/>
    <property type="project" value="InterPro"/>
</dbReference>
<dbReference type="GO" id="GO:0006412">
    <property type="term" value="P:translation"/>
    <property type="evidence" value="ECO:0007669"/>
    <property type="project" value="UniProtKB-UniRule"/>
</dbReference>
<dbReference type="FunFam" id="3.30.70.330:FF:000001">
    <property type="entry name" value="50S ribosomal protein L23"/>
    <property type="match status" value="1"/>
</dbReference>
<dbReference type="Gene3D" id="3.30.70.330">
    <property type="match status" value="1"/>
</dbReference>
<dbReference type="HAMAP" id="MF_01369_B">
    <property type="entry name" value="Ribosomal_uL23_B"/>
    <property type="match status" value="1"/>
</dbReference>
<dbReference type="InterPro" id="IPR012677">
    <property type="entry name" value="Nucleotide-bd_a/b_plait_sf"/>
</dbReference>
<dbReference type="InterPro" id="IPR001849">
    <property type="entry name" value="PH_domain"/>
</dbReference>
<dbReference type="InterPro" id="IPR013025">
    <property type="entry name" value="Ribosomal_uL23-like"/>
</dbReference>
<dbReference type="InterPro" id="IPR012678">
    <property type="entry name" value="Ribosomal_uL23/eL15/eS24_sf"/>
</dbReference>
<dbReference type="InterPro" id="IPR001014">
    <property type="entry name" value="Ribosomal_uL23_CS"/>
</dbReference>
<dbReference type="NCBIfam" id="NF004359">
    <property type="entry name" value="PRK05738.1-3"/>
    <property type="match status" value="1"/>
</dbReference>
<dbReference type="NCBIfam" id="NF004363">
    <property type="entry name" value="PRK05738.2-4"/>
    <property type="match status" value="1"/>
</dbReference>
<dbReference type="NCBIfam" id="NF004366">
    <property type="entry name" value="PRK05738.3-2"/>
    <property type="match status" value="1"/>
</dbReference>
<dbReference type="PANTHER" id="PTHR11620">
    <property type="entry name" value="60S RIBOSOMAL PROTEIN L23A"/>
    <property type="match status" value="1"/>
</dbReference>
<dbReference type="Pfam" id="PF00276">
    <property type="entry name" value="Ribosomal_L23"/>
    <property type="match status" value="1"/>
</dbReference>
<dbReference type="SUPFAM" id="SSF54189">
    <property type="entry name" value="Ribosomal proteins S24e, L23 and L15e"/>
    <property type="match status" value="1"/>
</dbReference>
<dbReference type="PROSITE" id="PS00050">
    <property type="entry name" value="RIBOSOMAL_L23"/>
    <property type="match status" value="1"/>
</dbReference>
<gene>
    <name evidence="1" type="primary">rplW</name>
    <name type="ordered locus">Gmet_0628</name>
</gene>
<reference key="1">
    <citation type="journal article" date="2009" name="BMC Microbiol.">
        <title>The genome sequence of Geobacter metallireducens: features of metabolism, physiology and regulation common and dissimilar to Geobacter sulfurreducens.</title>
        <authorList>
            <person name="Aklujkar M."/>
            <person name="Krushkal J."/>
            <person name="DiBartolo G."/>
            <person name="Lapidus A."/>
            <person name="Land M.L."/>
            <person name="Lovley D.R."/>
        </authorList>
    </citation>
    <scope>NUCLEOTIDE SEQUENCE [LARGE SCALE GENOMIC DNA]</scope>
    <source>
        <strain>ATCC 53774 / DSM 7210 / GS-15</strain>
    </source>
</reference>
<evidence type="ECO:0000255" key="1">
    <source>
        <dbReference type="HAMAP-Rule" id="MF_01369"/>
    </source>
</evidence>
<evidence type="ECO:0000305" key="2"/>
<keyword id="KW-1185">Reference proteome</keyword>
<keyword id="KW-0687">Ribonucleoprotein</keyword>
<keyword id="KW-0689">Ribosomal protein</keyword>
<keyword id="KW-0694">RNA-binding</keyword>
<keyword id="KW-0699">rRNA-binding</keyword>
<comment type="function">
    <text evidence="1">One of the early assembly proteins it binds 23S rRNA. One of the proteins that surrounds the polypeptide exit tunnel on the outside of the ribosome. Forms the main docking site for trigger factor binding to the ribosome.</text>
</comment>
<comment type="subunit">
    <text evidence="1">Part of the 50S ribosomal subunit. Contacts protein L29, and trigger factor when it is bound to the ribosome.</text>
</comment>
<comment type="similarity">
    <text evidence="1">Belongs to the universal ribosomal protein uL23 family.</text>
</comment>
<protein>
    <recommendedName>
        <fullName evidence="1">Large ribosomal subunit protein uL23</fullName>
    </recommendedName>
    <alternativeName>
        <fullName evidence="2">50S ribosomal protein L23</fullName>
    </alternativeName>
</protein>
<accession>Q39Y04</accession>